<sequence length="243" mass="25130">MIREHFEFRQTITTILADDRGHIEAAKSGMLAARREVERQIAGDPYFSATLEPYTPNNPANVPASMARAAAEAGVGPMAAVAGAIARAGVEAMAGAGAAFGLVDNGGDIALVSNREVKIGIYAGASPLSGRFAFLIPPGEEILGICTSSATVGPSISFGTADAVTVFSPDVAAADAWATAICNRITADDTSVLDDLPKTGVLGVLAVIGDAVVRWGDLPPIVRARVDERLITAGSDWQYYGRS</sequence>
<proteinExistence type="inferred from homology"/>
<dbReference type="EMBL" id="CP000562">
    <property type="protein sequence ID" value="ABN57448.1"/>
    <property type="molecule type" value="Genomic_DNA"/>
</dbReference>
<dbReference type="RefSeq" id="WP_011844359.1">
    <property type="nucleotide sequence ID" value="NC_009051.1"/>
</dbReference>
<dbReference type="SMR" id="A3CVP8"/>
<dbReference type="STRING" id="368407.Memar_1519"/>
<dbReference type="GeneID" id="4846544"/>
<dbReference type="KEGG" id="mem:Memar_1519"/>
<dbReference type="eggNOG" id="arCOG04376">
    <property type="taxonomic scope" value="Archaea"/>
</dbReference>
<dbReference type="HOGENOM" id="CLU_074757_0_0_2"/>
<dbReference type="OrthoDB" id="50299at2157"/>
<dbReference type="Proteomes" id="UP000002146">
    <property type="component" value="Chromosome"/>
</dbReference>
<dbReference type="Gene3D" id="3.10.520.10">
    <property type="entry name" value="ApbE-like domains"/>
    <property type="match status" value="1"/>
</dbReference>
<dbReference type="HAMAP" id="MF_01079">
    <property type="entry name" value="UPF0280"/>
    <property type="match status" value="1"/>
</dbReference>
<dbReference type="InterPro" id="IPR003374">
    <property type="entry name" value="ApbE-like_sf"/>
</dbReference>
<dbReference type="InterPro" id="IPR037456">
    <property type="entry name" value="MA1715-like"/>
</dbReference>
<dbReference type="InterPro" id="IPR007183">
    <property type="entry name" value="UPF0280"/>
</dbReference>
<dbReference type="NCBIfam" id="NF003324">
    <property type="entry name" value="PRK04334.1-4"/>
    <property type="match status" value="1"/>
</dbReference>
<dbReference type="PIRSF" id="PIRSF006421">
    <property type="entry name" value="UCP006421"/>
    <property type="match status" value="1"/>
</dbReference>
<dbReference type="SUPFAM" id="SSF143631">
    <property type="entry name" value="ApbE-like"/>
    <property type="match status" value="1"/>
</dbReference>
<feature type="chain" id="PRO_0000366708" description="UPF0280 protein Memar_1519">
    <location>
        <begin position="1"/>
        <end position="243"/>
    </location>
</feature>
<comment type="similarity">
    <text evidence="1">Belongs to the UPF0280 family.</text>
</comment>
<name>Y1519_METMJ</name>
<gene>
    <name type="ordered locus">Memar_1519</name>
</gene>
<accession>A3CVP8</accession>
<protein>
    <recommendedName>
        <fullName evidence="1">UPF0280 protein Memar_1519</fullName>
    </recommendedName>
</protein>
<evidence type="ECO:0000255" key="1">
    <source>
        <dbReference type="HAMAP-Rule" id="MF_01079"/>
    </source>
</evidence>
<reference key="1">
    <citation type="journal article" date="2009" name="Stand. Genomic Sci.">
        <title>Complete genome sequence of Methanoculleus marisnigri Romesser et al. 1981 type strain JR1.</title>
        <authorList>
            <person name="Anderson I.J."/>
            <person name="Sieprawska-Lupa M."/>
            <person name="Lapidus A."/>
            <person name="Nolan M."/>
            <person name="Copeland A."/>
            <person name="Glavina Del Rio T."/>
            <person name="Tice H."/>
            <person name="Dalin E."/>
            <person name="Barry K."/>
            <person name="Saunders E."/>
            <person name="Han C."/>
            <person name="Brettin T."/>
            <person name="Detter J.C."/>
            <person name="Bruce D."/>
            <person name="Mikhailova N."/>
            <person name="Pitluck S."/>
            <person name="Hauser L."/>
            <person name="Land M."/>
            <person name="Lucas S."/>
            <person name="Richardson P."/>
            <person name="Whitman W.B."/>
            <person name="Kyrpides N.C."/>
        </authorList>
    </citation>
    <scope>NUCLEOTIDE SEQUENCE [LARGE SCALE GENOMIC DNA]</scope>
    <source>
        <strain>ATCC 35101 / DSM 1498 / JR1</strain>
    </source>
</reference>
<organism>
    <name type="scientific">Methanoculleus marisnigri (strain ATCC 35101 / DSM 1498 / JR1)</name>
    <dbReference type="NCBI Taxonomy" id="368407"/>
    <lineage>
        <taxon>Archaea</taxon>
        <taxon>Methanobacteriati</taxon>
        <taxon>Methanobacteriota</taxon>
        <taxon>Stenosarchaea group</taxon>
        <taxon>Methanomicrobia</taxon>
        <taxon>Methanomicrobiales</taxon>
        <taxon>Methanomicrobiaceae</taxon>
        <taxon>Methanoculleus</taxon>
    </lineage>
</organism>